<gene>
    <name evidence="3" type="ordered locus">At4g18257</name>
    <name evidence="4" type="ORF">T9A21.110</name>
</gene>
<accession>Q8GWI5</accession>
<accession>O49729</accession>
<dbReference type="EMBL" id="AL021713">
    <property type="protein sequence ID" value="CAA16798.1"/>
    <property type="status" value="ALT_SEQ"/>
    <property type="molecule type" value="Genomic_DNA"/>
</dbReference>
<dbReference type="EMBL" id="AL161548">
    <property type="protein sequence ID" value="CAB78828.1"/>
    <property type="status" value="ALT_SEQ"/>
    <property type="molecule type" value="Genomic_DNA"/>
</dbReference>
<dbReference type="EMBL" id="CP002687">
    <property type="status" value="NOT_ANNOTATED_CDS"/>
    <property type="molecule type" value="Genomic_DNA"/>
</dbReference>
<dbReference type="EMBL" id="AK118819">
    <property type="protein sequence ID" value="BAC43409.1"/>
    <property type="molecule type" value="mRNA"/>
</dbReference>
<dbReference type="PIR" id="T04928">
    <property type="entry name" value="T04928"/>
</dbReference>
<dbReference type="SMR" id="Q8GWI5"/>
<dbReference type="STRING" id="3702.Q8GWI5"/>
<dbReference type="iPTMnet" id="Q8GWI5"/>
<dbReference type="PeptideAtlas" id="Q8GWI5"/>
<dbReference type="Araport" id="AT4G18257"/>
<dbReference type="TAIR" id="AT4G18257"/>
<dbReference type="HOGENOM" id="CLU_525167_0_0_1"/>
<dbReference type="InParanoid" id="Q8GWI5"/>
<dbReference type="PRO" id="PR:Q8GWI5"/>
<dbReference type="Proteomes" id="UP000006548">
    <property type="component" value="Chromosome 4"/>
</dbReference>
<dbReference type="GO" id="GO:0005634">
    <property type="term" value="C:nucleus"/>
    <property type="evidence" value="ECO:0000318"/>
    <property type="project" value="GO_Central"/>
</dbReference>
<dbReference type="InterPro" id="IPR025066">
    <property type="entry name" value="CCDC174-like"/>
</dbReference>
<dbReference type="PANTHER" id="PTHR15885">
    <property type="entry name" value="COILED-COIL DOMAIN-CONTAINING PROTEIN 174"/>
    <property type="match status" value="1"/>
</dbReference>
<dbReference type="PANTHER" id="PTHR15885:SF1">
    <property type="entry name" value="COILED-COIL DOMAIN-CONTAINING PROTEIN 174"/>
    <property type="match status" value="1"/>
</dbReference>
<keyword id="KW-0175">Coiled coil</keyword>
<keyword id="KW-0597">Phosphoprotein</keyword>
<keyword id="KW-1185">Reference proteome</keyword>
<sequence length="257" mass="29115">MVGEEETKKRVVTESLGWLTESSIMPKKHRAIEGVGPSSIMELKAQLYKSQEEAKQTKDFTGSDAQYHRAKERIAAKDSFAAKNSGVESRNLKDKLEHKAVKDGAVSYAALEKKAQLYDKLARGELSDEEGEEKYCVDFFRKGIQHEDPKPSSTYNSSISAPPEDFKQDGEDDGSLFSTKFAGLGHAIGTADVGQHVRMVREVHEEVNQAREKATELKQRRQEQATNRREKLKQAYLRKQLEKLKAQQQQQEDEQKT</sequence>
<comment type="sequence caution" evidence="3">
    <conflict type="erroneous gene model prediction">
        <sequence resource="EMBL-CDS" id="CAA16798"/>
    </conflict>
    <text>The predicted gene has been split into 2 genes: At4g18257 and At4g18260.</text>
</comment>
<comment type="sequence caution" evidence="3">
    <conflict type="erroneous gene model prediction">
        <sequence resource="EMBL-CDS" id="CAB78828"/>
    </conflict>
    <text>The predicted gene has been split into 2 genes: At4g18257 and At4g18260.</text>
</comment>
<feature type="chain" id="PRO_0000430471" description="Uncharacterized protein At4g18257">
    <location>
        <begin position="1"/>
        <end position="257"/>
    </location>
</feature>
<feature type="region of interest" description="Disordered" evidence="2">
    <location>
        <begin position="146"/>
        <end position="174"/>
    </location>
</feature>
<feature type="region of interest" description="Disordered" evidence="2">
    <location>
        <begin position="210"/>
        <end position="231"/>
    </location>
</feature>
<feature type="coiled-coil region" evidence="1">
    <location>
        <begin position="196"/>
        <end position="257"/>
    </location>
</feature>
<feature type="compositionally biased region" description="Polar residues" evidence="2">
    <location>
        <begin position="151"/>
        <end position="160"/>
    </location>
</feature>
<feature type="modified residue" description="Phosphoserine" evidence="5">
    <location>
        <position position="127"/>
    </location>
</feature>
<evidence type="ECO:0000255" key="1"/>
<evidence type="ECO:0000256" key="2">
    <source>
        <dbReference type="SAM" id="MobiDB-lite"/>
    </source>
</evidence>
<evidence type="ECO:0000305" key="3"/>
<evidence type="ECO:0000312" key="4">
    <source>
        <dbReference type="EMBL" id="CAA16798.1"/>
    </source>
</evidence>
<evidence type="ECO:0007744" key="5">
    <source>
    </source>
</evidence>
<protein>
    <recommendedName>
        <fullName>Uncharacterized protein At4g18257</fullName>
    </recommendedName>
</protein>
<proteinExistence type="evidence at protein level"/>
<organism>
    <name type="scientific">Arabidopsis thaliana</name>
    <name type="common">Mouse-ear cress</name>
    <dbReference type="NCBI Taxonomy" id="3702"/>
    <lineage>
        <taxon>Eukaryota</taxon>
        <taxon>Viridiplantae</taxon>
        <taxon>Streptophyta</taxon>
        <taxon>Embryophyta</taxon>
        <taxon>Tracheophyta</taxon>
        <taxon>Spermatophyta</taxon>
        <taxon>Magnoliopsida</taxon>
        <taxon>eudicotyledons</taxon>
        <taxon>Gunneridae</taxon>
        <taxon>Pentapetalae</taxon>
        <taxon>rosids</taxon>
        <taxon>malvids</taxon>
        <taxon>Brassicales</taxon>
        <taxon>Brassicaceae</taxon>
        <taxon>Camelineae</taxon>
        <taxon>Arabidopsis</taxon>
    </lineage>
</organism>
<name>Y4826_ARATH</name>
<reference key="1">
    <citation type="journal article" date="1999" name="Nature">
        <title>Sequence and analysis of chromosome 4 of the plant Arabidopsis thaliana.</title>
        <authorList>
            <person name="Mayer K.F.X."/>
            <person name="Schueller C."/>
            <person name="Wambutt R."/>
            <person name="Murphy G."/>
            <person name="Volckaert G."/>
            <person name="Pohl T."/>
            <person name="Duesterhoeft A."/>
            <person name="Stiekema W."/>
            <person name="Entian K.-D."/>
            <person name="Terryn N."/>
            <person name="Harris B."/>
            <person name="Ansorge W."/>
            <person name="Brandt P."/>
            <person name="Grivell L.A."/>
            <person name="Rieger M."/>
            <person name="Weichselgartner M."/>
            <person name="de Simone V."/>
            <person name="Obermaier B."/>
            <person name="Mache R."/>
            <person name="Mueller M."/>
            <person name="Kreis M."/>
            <person name="Delseny M."/>
            <person name="Puigdomenech P."/>
            <person name="Watson M."/>
            <person name="Schmidtheini T."/>
            <person name="Reichert B."/>
            <person name="Portetelle D."/>
            <person name="Perez-Alonso M."/>
            <person name="Boutry M."/>
            <person name="Bancroft I."/>
            <person name="Vos P."/>
            <person name="Hoheisel J."/>
            <person name="Zimmermann W."/>
            <person name="Wedler H."/>
            <person name="Ridley P."/>
            <person name="Langham S.-A."/>
            <person name="McCullagh B."/>
            <person name="Bilham L."/>
            <person name="Robben J."/>
            <person name="van der Schueren J."/>
            <person name="Grymonprez B."/>
            <person name="Chuang Y.-J."/>
            <person name="Vandenbussche F."/>
            <person name="Braeken M."/>
            <person name="Weltjens I."/>
            <person name="Voet M."/>
            <person name="Bastiaens I."/>
            <person name="Aert R."/>
            <person name="Defoor E."/>
            <person name="Weitzenegger T."/>
            <person name="Bothe G."/>
            <person name="Ramsperger U."/>
            <person name="Hilbert H."/>
            <person name="Braun M."/>
            <person name="Holzer E."/>
            <person name="Brandt A."/>
            <person name="Peters S."/>
            <person name="van Staveren M."/>
            <person name="Dirkse W."/>
            <person name="Mooijman P."/>
            <person name="Klein Lankhorst R."/>
            <person name="Rose M."/>
            <person name="Hauf J."/>
            <person name="Koetter P."/>
            <person name="Berneiser S."/>
            <person name="Hempel S."/>
            <person name="Feldpausch M."/>
            <person name="Lamberth S."/>
            <person name="Van den Daele H."/>
            <person name="De Keyser A."/>
            <person name="Buysshaert C."/>
            <person name="Gielen J."/>
            <person name="Villarroel R."/>
            <person name="De Clercq R."/>
            <person name="van Montagu M."/>
            <person name="Rogers J."/>
            <person name="Cronin A."/>
            <person name="Quail M.A."/>
            <person name="Bray-Allen S."/>
            <person name="Clark L."/>
            <person name="Doggett J."/>
            <person name="Hall S."/>
            <person name="Kay M."/>
            <person name="Lennard N."/>
            <person name="McLay K."/>
            <person name="Mayes R."/>
            <person name="Pettett A."/>
            <person name="Rajandream M.A."/>
            <person name="Lyne M."/>
            <person name="Benes V."/>
            <person name="Rechmann S."/>
            <person name="Borkova D."/>
            <person name="Bloecker H."/>
            <person name="Scharfe M."/>
            <person name="Grimm M."/>
            <person name="Loehnert T.-H."/>
            <person name="Dose S."/>
            <person name="de Haan M."/>
            <person name="Maarse A.C."/>
            <person name="Schaefer M."/>
            <person name="Mueller-Auer S."/>
            <person name="Gabel C."/>
            <person name="Fuchs M."/>
            <person name="Fartmann B."/>
            <person name="Granderath K."/>
            <person name="Dauner D."/>
            <person name="Herzl A."/>
            <person name="Neumann S."/>
            <person name="Argiriou A."/>
            <person name="Vitale D."/>
            <person name="Liguori R."/>
            <person name="Piravandi E."/>
            <person name="Massenet O."/>
            <person name="Quigley F."/>
            <person name="Clabauld G."/>
            <person name="Muendlein A."/>
            <person name="Felber R."/>
            <person name="Schnabl S."/>
            <person name="Hiller R."/>
            <person name="Schmidt W."/>
            <person name="Lecharny A."/>
            <person name="Aubourg S."/>
            <person name="Chefdor F."/>
            <person name="Cooke R."/>
            <person name="Berger C."/>
            <person name="Monfort A."/>
            <person name="Casacuberta E."/>
            <person name="Gibbons T."/>
            <person name="Weber N."/>
            <person name="Vandenbol M."/>
            <person name="Bargues M."/>
            <person name="Terol J."/>
            <person name="Torres A."/>
            <person name="Perez-Perez A."/>
            <person name="Purnelle B."/>
            <person name="Bent E."/>
            <person name="Johnson S."/>
            <person name="Tacon D."/>
            <person name="Jesse T."/>
            <person name="Heijnen L."/>
            <person name="Schwarz S."/>
            <person name="Scholler P."/>
            <person name="Heber S."/>
            <person name="Francs P."/>
            <person name="Bielke C."/>
            <person name="Frishman D."/>
            <person name="Haase D."/>
            <person name="Lemcke K."/>
            <person name="Mewes H.-W."/>
            <person name="Stocker S."/>
            <person name="Zaccaria P."/>
            <person name="Bevan M."/>
            <person name="Wilson R.K."/>
            <person name="de la Bastide M."/>
            <person name="Habermann K."/>
            <person name="Parnell L."/>
            <person name="Dedhia N."/>
            <person name="Gnoj L."/>
            <person name="Schutz K."/>
            <person name="Huang E."/>
            <person name="Spiegel L."/>
            <person name="Sekhon M."/>
            <person name="Murray J."/>
            <person name="Sheet P."/>
            <person name="Cordes M."/>
            <person name="Abu-Threideh J."/>
            <person name="Stoneking T."/>
            <person name="Kalicki J."/>
            <person name="Graves T."/>
            <person name="Harmon G."/>
            <person name="Edwards J."/>
            <person name="Latreille P."/>
            <person name="Courtney L."/>
            <person name="Cloud J."/>
            <person name="Abbott A."/>
            <person name="Scott K."/>
            <person name="Johnson D."/>
            <person name="Minx P."/>
            <person name="Bentley D."/>
            <person name="Fulton B."/>
            <person name="Miller N."/>
            <person name="Greco T."/>
            <person name="Kemp K."/>
            <person name="Kramer J."/>
            <person name="Fulton L."/>
            <person name="Mardis E."/>
            <person name="Dante M."/>
            <person name="Pepin K."/>
            <person name="Hillier L.W."/>
            <person name="Nelson J."/>
            <person name="Spieth J."/>
            <person name="Ryan E."/>
            <person name="Andrews S."/>
            <person name="Geisel C."/>
            <person name="Layman D."/>
            <person name="Du H."/>
            <person name="Ali J."/>
            <person name="Berghoff A."/>
            <person name="Jones K."/>
            <person name="Drone K."/>
            <person name="Cotton M."/>
            <person name="Joshu C."/>
            <person name="Antonoiu B."/>
            <person name="Zidanic M."/>
            <person name="Strong C."/>
            <person name="Sun H."/>
            <person name="Lamar B."/>
            <person name="Yordan C."/>
            <person name="Ma P."/>
            <person name="Zhong J."/>
            <person name="Preston R."/>
            <person name="Vil D."/>
            <person name="Shekher M."/>
            <person name="Matero A."/>
            <person name="Shah R."/>
            <person name="Swaby I.K."/>
            <person name="O'Shaughnessy A."/>
            <person name="Rodriguez M."/>
            <person name="Hoffman J."/>
            <person name="Till S."/>
            <person name="Granat S."/>
            <person name="Shohdy N."/>
            <person name="Hasegawa A."/>
            <person name="Hameed A."/>
            <person name="Lodhi M."/>
            <person name="Johnson A."/>
            <person name="Chen E."/>
            <person name="Marra M.A."/>
            <person name="Martienssen R."/>
            <person name="McCombie W.R."/>
        </authorList>
    </citation>
    <scope>NUCLEOTIDE SEQUENCE [LARGE SCALE GENOMIC DNA]</scope>
    <source>
        <strain>cv. Columbia</strain>
    </source>
</reference>
<reference key="2">
    <citation type="journal article" date="2017" name="Plant J.">
        <title>Araport11: a complete reannotation of the Arabidopsis thaliana reference genome.</title>
        <authorList>
            <person name="Cheng C.Y."/>
            <person name="Krishnakumar V."/>
            <person name="Chan A.P."/>
            <person name="Thibaud-Nissen F."/>
            <person name="Schobel S."/>
            <person name="Town C.D."/>
        </authorList>
    </citation>
    <scope>GENOME REANNOTATION</scope>
    <source>
        <strain>cv. Columbia</strain>
    </source>
</reference>
<reference key="3">
    <citation type="journal article" date="2002" name="Science">
        <title>Functional annotation of a full-length Arabidopsis cDNA collection.</title>
        <authorList>
            <person name="Seki M."/>
            <person name="Narusaka M."/>
            <person name="Kamiya A."/>
            <person name="Ishida J."/>
            <person name="Satou M."/>
            <person name="Sakurai T."/>
            <person name="Nakajima M."/>
            <person name="Enju A."/>
            <person name="Akiyama K."/>
            <person name="Oono Y."/>
            <person name="Muramatsu M."/>
            <person name="Hayashizaki Y."/>
            <person name="Kawai J."/>
            <person name="Carninci P."/>
            <person name="Itoh M."/>
            <person name="Ishii Y."/>
            <person name="Arakawa T."/>
            <person name="Shibata K."/>
            <person name="Shinagawa A."/>
            <person name="Shinozaki K."/>
        </authorList>
    </citation>
    <scope>NUCLEOTIDE SEQUENCE [LARGE SCALE MRNA]</scope>
    <source>
        <strain>cv. Columbia</strain>
    </source>
</reference>
<reference key="4">
    <citation type="journal article" date="2009" name="Plant Physiol.">
        <title>Large-scale Arabidopsis phosphoproteome profiling reveals novel chloroplast kinase substrates and phosphorylation networks.</title>
        <authorList>
            <person name="Reiland S."/>
            <person name="Messerli G."/>
            <person name="Baerenfaller K."/>
            <person name="Gerrits B."/>
            <person name="Endler A."/>
            <person name="Grossmann J."/>
            <person name="Gruissem W."/>
            <person name="Baginsky S."/>
        </authorList>
    </citation>
    <scope>PHOSPHORYLATION [LARGE SCALE ANALYSIS] AT SER-127</scope>
    <scope>IDENTIFICATION BY MASS SPECTROMETRY [LARGE SCALE ANALYSIS]</scope>
</reference>